<sequence length="244" mass="26645">MATIGRDTTISWLGHGTFHIQTPGGKKILIDAWVDGNPVCPDEWKQRVRSEGLDAIFLTHGHFDHIADILDLATATNATIVGQFDITSWLASKGVGQDRLVGFNKGGTVEVAGIRATMTHATHSSTFTDNGIIVPMGTEAGYVLRMENGFVMYHTGDTAVTMDMQIIGDLYRPELVFLPIGDHFTMDPMQAAYALKLIRPKFAIPEHYGTFPILRGTPDQLREQCSAFGVDVTVIDLKPGESVS</sequence>
<comment type="similarity">
    <text evidence="1">Belongs to the UPF0173 family.</text>
</comment>
<accession>A7NQ20</accession>
<name>Y3617_ROSCS</name>
<gene>
    <name type="ordered locus">Rcas_3617</name>
</gene>
<protein>
    <recommendedName>
        <fullName evidence="1">UPF0173 metal-dependent hydrolase Rcas_3617</fullName>
    </recommendedName>
</protein>
<evidence type="ECO:0000255" key="1">
    <source>
        <dbReference type="HAMAP-Rule" id="MF_00457"/>
    </source>
</evidence>
<proteinExistence type="inferred from homology"/>
<feature type="chain" id="PRO_0000367210" description="UPF0173 metal-dependent hydrolase Rcas_3617">
    <location>
        <begin position="1"/>
        <end position="244"/>
    </location>
</feature>
<organism>
    <name type="scientific">Roseiflexus castenholzii (strain DSM 13941 / HLO8)</name>
    <dbReference type="NCBI Taxonomy" id="383372"/>
    <lineage>
        <taxon>Bacteria</taxon>
        <taxon>Bacillati</taxon>
        <taxon>Chloroflexota</taxon>
        <taxon>Chloroflexia</taxon>
        <taxon>Chloroflexales</taxon>
        <taxon>Roseiflexineae</taxon>
        <taxon>Roseiflexaceae</taxon>
        <taxon>Roseiflexus</taxon>
    </lineage>
</organism>
<keyword id="KW-0378">Hydrolase</keyword>
<keyword id="KW-1185">Reference proteome</keyword>
<dbReference type="EMBL" id="CP000804">
    <property type="protein sequence ID" value="ABU59666.1"/>
    <property type="molecule type" value="Genomic_DNA"/>
</dbReference>
<dbReference type="RefSeq" id="WP_012122089.1">
    <property type="nucleotide sequence ID" value="NC_009767.1"/>
</dbReference>
<dbReference type="SMR" id="A7NQ20"/>
<dbReference type="STRING" id="383372.Rcas_3617"/>
<dbReference type="KEGG" id="rca:Rcas_3617"/>
<dbReference type="eggNOG" id="COG2220">
    <property type="taxonomic scope" value="Bacteria"/>
</dbReference>
<dbReference type="HOGENOM" id="CLU_070010_4_0_0"/>
<dbReference type="OrthoDB" id="9805728at2"/>
<dbReference type="Proteomes" id="UP000000263">
    <property type="component" value="Chromosome"/>
</dbReference>
<dbReference type="GO" id="GO:0016787">
    <property type="term" value="F:hydrolase activity"/>
    <property type="evidence" value="ECO:0007669"/>
    <property type="project" value="UniProtKB-UniRule"/>
</dbReference>
<dbReference type="Gene3D" id="3.60.15.10">
    <property type="entry name" value="Ribonuclease Z/Hydroxyacylglutathione hydrolase-like"/>
    <property type="match status" value="1"/>
</dbReference>
<dbReference type="HAMAP" id="MF_00457">
    <property type="entry name" value="UPF0173"/>
    <property type="match status" value="1"/>
</dbReference>
<dbReference type="InterPro" id="IPR001279">
    <property type="entry name" value="Metallo-B-lactamas"/>
</dbReference>
<dbReference type="InterPro" id="IPR036866">
    <property type="entry name" value="RibonucZ/Hydroxyglut_hydro"/>
</dbReference>
<dbReference type="InterPro" id="IPR022877">
    <property type="entry name" value="UPF0173"/>
</dbReference>
<dbReference type="InterPro" id="IPR050114">
    <property type="entry name" value="UPF0173_UPF0282_UlaG_hydrolase"/>
</dbReference>
<dbReference type="NCBIfam" id="NF001911">
    <property type="entry name" value="PRK00685.1"/>
    <property type="match status" value="1"/>
</dbReference>
<dbReference type="PANTHER" id="PTHR43546:SF3">
    <property type="entry name" value="UPF0173 METAL-DEPENDENT HYDROLASE MJ1163"/>
    <property type="match status" value="1"/>
</dbReference>
<dbReference type="PANTHER" id="PTHR43546">
    <property type="entry name" value="UPF0173 METAL-DEPENDENT HYDROLASE MJ1163-RELATED"/>
    <property type="match status" value="1"/>
</dbReference>
<dbReference type="Pfam" id="PF12706">
    <property type="entry name" value="Lactamase_B_2"/>
    <property type="match status" value="1"/>
</dbReference>
<dbReference type="SMART" id="SM00849">
    <property type="entry name" value="Lactamase_B"/>
    <property type="match status" value="1"/>
</dbReference>
<dbReference type="SUPFAM" id="SSF56281">
    <property type="entry name" value="Metallo-hydrolase/oxidoreductase"/>
    <property type="match status" value="1"/>
</dbReference>
<reference key="1">
    <citation type="submission" date="2007-08" db="EMBL/GenBank/DDBJ databases">
        <title>Complete sequence of Roseiflexus castenholzii DSM 13941.</title>
        <authorList>
            <consortium name="US DOE Joint Genome Institute"/>
            <person name="Copeland A."/>
            <person name="Lucas S."/>
            <person name="Lapidus A."/>
            <person name="Barry K."/>
            <person name="Glavina del Rio T."/>
            <person name="Dalin E."/>
            <person name="Tice H."/>
            <person name="Pitluck S."/>
            <person name="Thompson L.S."/>
            <person name="Brettin T."/>
            <person name="Bruce D."/>
            <person name="Detter J.C."/>
            <person name="Han C."/>
            <person name="Tapia R."/>
            <person name="Schmutz J."/>
            <person name="Larimer F."/>
            <person name="Land M."/>
            <person name="Hauser L."/>
            <person name="Kyrpides N."/>
            <person name="Mikhailova N."/>
            <person name="Bryant D.A."/>
            <person name="Hanada S."/>
            <person name="Tsukatani Y."/>
            <person name="Richardson P."/>
        </authorList>
    </citation>
    <scope>NUCLEOTIDE SEQUENCE [LARGE SCALE GENOMIC DNA]</scope>
    <source>
        <strain>DSM 13941 / HLO8</strain>
    </source>
</reference>